<sequence>MSASYWDSSQRNKWQYSRESLARTRQKLWMLECQLYPQGTNILMEGGGKDAQPVTKNIPITHRDLHYDRDYNLRIYCYFLIMKLGRRLNVRQYALATAHVYLARFCLKASIREVNLYLLVTTCIYLACKVEECPQHIRTLVNEARSLWPEFVPPDPTKVTEFEFYLIEELQSYMIVHYPYRAMEQIAAALRRPPYNLVLSPDDLQNSWSLINDSYITDVHLLYPPHVIAMACLFITVCLRSAAGARDLQETFNRFMADSQVDLHEVMDTIQDFITLYDHWDKYNEPWIKFLLHNLYLRPHAGGTTVSGAAAGSAGPAGSVLTPNGTITGSTS</sequence>
<accession>Q75AX7</accession>
<proteinExistence type="inferred from homology"/>
<keyword id="KW-0010">Activator</keyword>
<keyword id="KW-0195">Cyclin</keyword>
<keyword id="KW-0539">Nucleus</keyword>
<keyword id="KW-1185">Reference proteome</keyword>
<keyword id="KW-0678">Repressor</keyword>
<keyword id="KW-0804">Transcription</keyword>
<keyword id="KW-0805">Transcription regulation</keyword>
<evidence type="ECO:0000250" key="1"/>
<evidence type="ECO:0000305" key="2"/>
<gene>
    <name type="primary">SSN8</name>
    <name type="ordered locus">ADL207W</name>
</gene>
<name>SSN8_EREGS</name>
<protein>
    <recommendedName>
        <fullName>RNA polymerase II holoenzyme cyclin-like subunit</fullName>
    </recommendedName>
</protein>
<reference key="1">
    <citation type="journal article" date="2004" name="Science">
        <title>The Ashbya gossypii genome as a tool for mapping the ancient Saccharomyces cerevisiae genome.</title>
        <authorList>
            <person name="Dietrich F.S."/>
            <person name="Voegeli S."/>
            <person name="Brachat S."/>
            <person name="Lerch A."/>
            <person name="Gates K."/>
            <person name="Steiner S."/>
            <person name="Mohr C."/>
            <person name="Poehlmann R."/>
            <person name="Luedi P."/>
            <person name="Choi S."/>
            <person name="Wing R.A."/>
            <person name="Flavier A."/>
            <person name="Gaffney T.D."/>
            <person name="Philippsen P."/>
        </authorList>
    </citation>
    <scope>NUCLEOTIDE SEQUENCE [LARGE SCALE GENOMIC DNA]</scope>
    <source>
        <strain>ATCC 10895 / CBS 109.51 / FGSC 9923 / NRRL Y-1056</strain>
    </source>
</reference>
<reference key="2">
    <citation type="journal article" date="2013" name="G3 (Bethesda)">
        <title>Genomes of Ashbya fungi isolated from insects reveal four mating-type loci, numerous translocations, lack of transposons, and distinct gene duplications.</title>
        <authorList>
            <person name="Dietrich F.S."/>
            <person name="Voegeli S."/>
            <person name="Kuo S."/>
            <person name="Philippsen P."/>
        </authorList>
    </citation>
    <scope>GENOME REANNOTATION</scope>
    <source>
        <strain>ATCC 10895 / CBS 109.51 / FGSC 9923 / NRRL Y-1056</strain>
    </source>
</reference>
<organism>
    <name type="scientific">Eremothecium gossypii (strain ATCC 10895 / CBS 109.51 / FGSC 9923 / NRRL Y-1056)</name>
    <name type="common">Yeast</name>
    <name type="synonym">Ashbya gossypii</name>
    <dbReference type="NCBI Taxonomy" id="284811"/>
    <lineage>
        <taxon>Eukaryota</taxon>
        <taxon>Fungi</taxon>
        <taxon>Dikarya</taxon>
        <taxon>Ascomycota</taxon>
        <taxon>Saccharomycotina</taxon>
        <taxon>Saccharomycetes</taxon>
        <taxon>Saccharomycetales</taxon>
        <taxon>Saccharomycetaceae</taxon>
        <taxon>Eremothecium</taxon>
    </lineage>
</organism>
<dbReference type="EMBL" id="AE016817">
    <property type="protein sequence ID" value="AAS51713.1"/>
    <property type="status" value="ALT_INIT"/>
    <property type="molecule type" value="Genomic_DNA"/>
</dbReference>
<dbReference type="RefSeq" id="NP_983889.1">
    <property type="nucleotide sequence ID" value="NM_209242.1"/>
</dbReference>
<dbReference type="SMR" id="Q75AX7"/>
<dbReference type="FunCoup" id="Q75AX7">
    <property type="interactions" value="1024"/>
</dbReference>
<dbReference type="STRING" id="284811.Q75AX7"/>
<dbReference type="GeneID" id="4620031"/>
<dbReference type="KEGG" id="ago:AGOS_ADL207W"/>
<dbReference type="eggNOG" id="KOG0794">
    <property type="taxonomic scope" value="Eukaryota"/>
</dbReference>
<dbReference type="InParanoid" id="Q75AX7"/>
<dbReference type="OrthoDB" id="10266018at2759"/>
<dbReference type="Proteomes" id="UP000000591">
    <property type="component" value="Chromosome IV"/>
</dbReference>
<dbReference type="GO" id="GO:0016592">
    <property type="term" value="C:mediator complex"/>
    <property type="evidence" value="ECO:0000318"/>
    <property type="project" value="GO_Central"/>
</dbReference>
<dbReference type="GO" id="GO:0005634">
    <property type="term" value="C:nucleus"/>
    <property type="evidence" value="ECO:0000318"/>
    <property type="project" value="GO_Central"/>
</dbReference>
<dbReference type="GO" id="GO:0016538">
    <property type="term" value="F:cyclin-dependent protein serine/threonine kinase regulator activity"/>
    <property type="evidence" value="ECO:0000318"/>
    <property type="project" value="GO_Central"/>
</dbReference>
<dbReference type="GO" id="GO:0045944">
    <property type="term" value="P:positive regulation of transcription by RNA polymerase II"/>
    <property type="evidence" value="ECO:0000318"/>
    <property type="project" value="GO_Central"/>
</dbReference>
<dbReference type="CDD" id="cd20513">
    <property type="entry name" value="CYCLIN_CCNC_rpt1"/>
    <property type="match status" value="1"/>
</dbReference>
<dbReference type="CDD" id="cd20546">
    <property type="entry name" value="CYCLIN_SpCG1C_ScCTK2-like_rpt2"/>
    <property type="match status" value="1"/>
</dbReference>
<dbReference type="FunFam" id="1.10.472.10:FF:000077">
    <property type="entry name" value="RNA polymerase II holoenzyme cyclin-like subunit"/>
    <property type="match status" value="1"/>
</dbReference>
<dbReference type="Gene3D" id="1.10.472.10">
    <property type="entry name" value="Cyclin-like"/>
    <property type="match status" value="2"/>
</dbReference>
<dbReference type="InterPro" id="IPR013763">
    <property type="entry name" value="Cyclin-like_dom"/>
</dbReference>
<dbReference type="InterPro" id="IPR036915">
    <property type="entry name" value="Cyclin-like_sf"/>
</dbReference>
<dbReference type="InterPro" id="IPR043198">
    <property type="entry name" value="Cyclin/Ssn8"/>
</dbReference>
<dbReference type="InterPro" id="IPR031658">
    <property type="entry name" value="Cyclin_C_2"/>
</dbReference>
<dbReference type="InterPro" id="IPR006671">
    <property type="entry name" value="Cyclin_N"/>
</dbReference>
<dbReference type="PANTHER" id="PTHR10026">
    <property type="entry name" value="CYCLIN"/>
    <property type="match status" value="1"/>
</dbReference>
<dbReference type="Pfam" id="PF16899">
    <property type="entry name" value="Cyclin_C_2"/>
    <property type="match status" value="1"/>
</dbReference>
<dbReference type="Pfam" id="PF00134">
    <property type="entry name" value="Cyclin_N"/>
    <property type="match status" value="1"/>
</dbReference>
<dbReference type="PIRSF" id="PIRSF028758">
    <property type="entry name" value="Cyclin, C/H/G types"/>
    <property type="match status" value="1"/>
</dbReference>
<dbReference type="SMART" id="SM00385">
    <property type="entry name" value="CYCLIN"/>
    <property type="match status" value="1"/>
</dbReference>
<dbReference type="SUPFAM" id="SSF47954">
    <property type="entry name" value="Cyclin-like"/>
    <property type="match status" value="2"/>
</dbReference>
<comment type="function">
    <text evidence="1">Component of the SRB8-11 complex. The SRB8-11 complex is a regulatory module of the Mediator complex which is itself involved in regulation of basal and activated RNA polymerase II-dependent transcription. The SRB8-11 complex may be involved in the transcriptional repression of a subset of genes regulated by Mediator. It may inhibit the association of the Mediator complex with RNA polymerase II to form the holoenzyme complex. The SRB8-11 complex phosphorylates the C-terminal domain (CTD) of the largest subunit of RNA polymerase II (By similarity).</text>
</comment>
<comment type="subunit">
    <text evidence="1">Component of the SRB8-11 complex, a regulatory module of the Mediator complex.</text>
</comment>
<comment type="subcellular location">
    <subcellularLocation>
        <location evidence="2">Nucleus</location>
    </subcellularLocation>
</comment>
<comment type="similarity">
    <text evidence="2">Belongs to the cyclin family. Cyclin C subfamily.</text>
</comment>
<comment type="sequence caution" evidence="2">
    <conflict type="erroneous initiation">
        <sequence resource="EMBL-CDS" id="AAS51713"/>
    </conflict>
</comment>
<feature type="chain" id="PRO_0000314265" description="RNA polymerase II holoenzyme cyclin-like subunit">
    <location>
        <begin position="1"/>
        <end position="332"/>
    </location>
</feature>
<feature type="domain" description="Cyclin N-terminal">
    <location>
        <begin position="74"/>
        <end position="175"/>
    </location>
</feature>